<feature type="chain" id="PRO_0000461580" description="Aspartokinase">
    <location>
        <begin position="1"/>
        <end position="615"/>
    </location>
</feature>
<feature type="domain" description="ACT" evidence="2">
    <location>
        <begin position="467"/>
        <end position="537"/>
    </location>
</feature>
<feature type="region of interest" description="Disordered" evidence="3">
    <location>
        <begin position="84"/>
        <end position="105"/>
    </location>
</feature>
<feature type="region of interest" description="Disordered" evidence="3">
    <location>
        <begin position="127"/>
        <end position="171"/>
    </location>
</feature>
<feature type="compositionally biased region" description="Low complexity" evidence="3">
    <location>
        <begin position="90"/>
        <end position="102"/>
    </location>
</feature>
<feature type="compositionally biased region" description="Low complexity" evidence="3">
    <location>
        <begin position="127"/>
        <end position="164"/>
    </location>
</feature>
<name>AK_CRYNH</name>
<accession>J9VS37</accession>
<proteinExistence type="inferred from homology"/>
<evidence type="ECO:0000250" key="1">
    <source>
        <dbReference type="UniProtKB" id="P10869"/>
    </source>
</evidence>
<evidence type="ECO:0000255" key="2">
    <source>
        <dbReference type="PROSITE-ProRule" id="PRU01007"/>
    </source>
</evidence>
<evidence type="ECO:0000256" key="3">
    <source>
        <dbReference type="SAM" id="MobiDB-lite"/>
    </source>
</evidence>
<evidence type="ECO:0000269" key="4">
    <source>
    </source>
</evidence>
<evidence type="ECO:0000303" key="5">
    <source>
    </source>
</evidence>
<evidence type="ECO:0000305" key="6"/>
<evidence type="ECO:0000312" key="7">
    <source>
        <dbReference type="EMBL" id="AFR97078.1"/>
    </source>
</evidence>
<evidence type="ECO:0000312" key="8">
    <source>
        <dbReference type="Proteomes" id="UP000010091"/>
    </source>
</evidence>
<keyword id="KW-0028">Amino-acid biosynthesis</keyword>
<keyword id="KW-0067">ATP-binding</keyword>
<keyword id="KW-0418">Kinase</keyword>
<keyword id="KW-0486">Methionine biosynthesis</keyword>
<keyword id="KW-0547">Nucleotide-binding</keyword>
<keyword id="KW-0791">Threonine biosynthesis</keyword>
<keyword id="KW-0808">Transferase</keyword>
<protein>
    <recommendedName>
        <fullName evidence="6">Aspartokinase</fullName>
        <ecNumber evidence="1">2.7.2.4</ecNumber>
    </recommendedName>
</protein>
<comment type="function">
    <text evidence="4">Phosphorylates aspartate, the first step in the biosynthesis of amino acids that derive from aspartate (the aspartate family of amino acids), including methioinine and threonine, the latter of which is a precursor to isoleucine.</text>
</comment>
<comment type="catalytic activity">
    <reaction evidence="1">
        <text>L-aspartate + ATP = 4-phospho-L-aspartate + ADP</text>
        <dbReference type="Rhea" id="RHEA:23776"/>
        <dbReference type="ChEBI" id="CHEBI:29991"/>
        <dbReference type="ChEBI" id="CHEBI:30616"/>
        <dbReference type="ChEBI" id="CHEBI:57535"/>
        <dbReference type="ChEBI" id="CHEBI:456216"/>
        <dbReference type="EC" id="2.7.2.4"/>
    </reaction>
    <physiologicalReaction direction="left-to-right" evidence="1">
        <dbReference type="Rhea" id="RHEA:23777"/>
    </physiologicalReaction>
</comment>
<comment type="pathway">
    <text evidence="4">Amino-acid biosynthesis; L-methionine biosynthesis via de novo pathway; L-homoserine from L-aspartate: step 1/3.</text>
</comment>
<comment type="pathway">
    <text evidence="4">Amino-acid biosynthesis; L-threonine biosynthesis; L-threonine from L-aspartate: step 1/5.</text>
</comment>
<comment type="disruption phenotype">
    <text evidence="4">Homoserine auxotrophy; the presence of methionine and threonine dipeptides (but not threonine amino acids), or homoserine, rescue growth on proline nitrogen source.</text>
</comment>
<comment type="similarity">
    <text evidence="6">Belongs to the aspartokinase family.</text>
</comment>
<dbReference type="EC" id="2.7.2.4" evidence="1"/>
<dbReference type="EMBL" id="CP003828">
    <property type="protein sequence ID" value="AFR97078.1"/>
    <property type="molecule type" value="Genomic_DNA"/>
</dbReference>
<dbReference type="RefSeq" id="XP_012051746.1">
    <property type="nucleotide sequence ID" value="XM_012196356.1"/>
</dbReference>
<dbReference type="SwissPalm" id="J9VS37"/>
<dbReference type="GeneID" id="23887782"/>
<dbReference type="KEGG" id="cng:CNAG_04347"/>
<dbReference type="VEuPathDB" id="FungiDB:CNAG_04347"/>
<dbReference type="HOGENOM" id="CLU_009116_6_4_1"/>
<dbReference type="OrthoDB" id="5696at5206"/>
<dbReference type="UniPathway" id="UPA00050">
    <property type="reaction ID" value="UER00461"/>
</dbReference>
<dbReference type="UniPathway" id="UPA00051">
    <property type="reaction ID" value="UER00462"/>
</dbReference>
<dbReference type="Proteomes" id="UP000010091">
    <property type="component" value="Chromosome 9"/>
</dbReference>
<dbReference type="GO" id="GO:0005829">
    <property type="term" value="C:cytosol"/>
    <property type="evidence" value="ECO:0007669"/>
    <property type="project" value="TreeGrafter"/>
</dbReference>
<dbReference type="GO" id="GO:0004072">
    <property type="term" value="F:aspartate kinase activity"/>
    <property type="evidence" value="ECO:0007669"/>
    <property type="project" value="UniProtKB-EC"/>
</dbReference>
<dbReference type="GO" id="GO:0005524">
    <property type="term" value="F:ATP binding"/>
    <property type="evidence" value="ECO:0007669"/>
    <property type="project" value="UniProtKB-KW"/>
</dbReference>
<dbReference type="GO" id="GO:0071266">
    <property type="term" value="P:'de novo' L-methionine biosynthetic process"/>
    <property type="evidence" value="ECO:0000315"/>
    <property type="project" value="UniProtKB"/>
</dbReference>
<dbReference type="GO" id="GO:0009090">
    <property type="term" value="P:homoserine biosynthetic process"/>
    <property type="evidence" value="ECO:0000315"/>
    <property type="project" value="UniProtKB"/>
</dbReference>
<dbReference type="GO" id="GO:0009089">
    <property type="term" value="P:lysine biosynthetic process via diaminopimelate"/>
    <property type="evidence" value="ECO:0007669"/>
    <property type="project" value="TreeGrafter"/>
</dbReference>
<dbReference type="GO" id="GO:0009088">
    <property type="term" value="P:threonine biosynthetic process"/>
    <property type="evidence" value="ECO:0000315"/>
    <property type="project" value="UniProtKB"/>
</dbReference>
<dbReference type="CDD" id="cd04247">
    <property type="entry name" value="AAK_AK-Hom3"/>
    <property type="match status" value="1"/>
</dbReference>
<dbReference type="FunFam" id="3.30.2130.10:FF:000001">
    <property type="entry name" value="Bifunctional aspartokinase/homoserine dehydrogenase"/>
    <property type="match status" value="1"/>
</dbReference>
<dbReference type="FunFam" id="3.40.1160.10:FF:000023">
    <property type="entry name" value="Probable aspartokinase"/>
    <property type="match status" value="1"/>
</dbReference>
<dbReference type="Gene3D" id="3.30.70.260">
    <property type="match status" value="2"/>
</dbReference>
<dbReference type="Gene3D" id="3.40.1160.10">
    <property type="entry name" value="Acetylglutamate kinase-like"/>
    <property type="match status" value="1"/>
</dbReference>
<dbReference type="InterPro" id="IPR036393">
    <property type="entry name" value="AceGlu_kinase-like_sf"/>
</dbReference>
<dbReference type="InterPro" id="IPR045865">
    <property type="entry name" value="ACT-like_dom_sf"/>
</dbReference>
<dbReference type="InterPro" id="IPR054352">
    <property type="entry name" value="ACT_Aspartokinase"/>
</dbReference>
<dbReference type="InterPro" id="IPR041747">
    <property type="entry name" value="AK-Hom3"/>
</dbReference>
<dbReference type="InterPro" id="IPR001048">
    <property type="entry name" value="Asp/Glu/Uridylate_kinase"/>
</dbReference>
<dbReference type="InterPro" id="IPR001341">
    <property type="entry name" value="Asp_kinase"/>
</dbReference>
<dbReference type="InterPro" id="IPR018042">
    <property type="entry name" value="Aspartate_kinase_CS"/>
</dbReference>
<dbReference type="NCBIfam" id="TIGR00657">
    <property type="entry name" value="asp_kinases"/>
    <property type="match status" value="1"/>
</dbReference>
<dbReference type="PANTHER" id="PTHR21499">
    <property type="entry name" value="ASPARTATE KINASE"/>
    <property type="match status" value="1"/>
</dbReference>
<dbReference type="PANTHER" id="PTHR21499:SF59">
    <property type="entry name" value="ASPARTOKINASE"/>
    <property type="match status" value="1"/>
</dbReference>
<dbReference type="Pfam" id="PF00696">
    <property type="entry name" value="AA_kinase"/>
    <property type="match status" value="1"/>
</dbReference>
<dbReference type="Pfam" id="PF22468">
    <property type="entry name" value="ACT_9"/>
    <property type="match status" value="1"/>
</dbReference>
<dbReference type="SUPFAM" id="SSF55021">
    <property type="entry name" value="ACT-like"/>
    <property type="match status" value="2"/>
</dbReference>
<dbReference type="SUPFAM" id="SSF53633">
    <property type="entry name" value="Carbamate kinase-like"/>
    <property type="match status" value="2"/>
</dbReference>
<dbReference type="PROSITE" id="PS00324">
    <property type="entry name" value="ASPARTOKINASE"/>
    <property type="match status" value="1"/>
</dbReference>
<organism evidence="8">
    <name type="scientific">Cryptococcus neoformans var. grubii serotype A (strain H99 / ATCC 208821 / CBS 10515 / FGSC 9487)</name>
    <name type="common">Filobasidiella neoformans var. grubii</name>
    <dbReference type="NCBI Taxonomy" id="235443"/>
    <lineage>
        <taxon>Eukaryota</taxon>
        <taxon>Fungi</taxon>
        <taxon>Dikarya</taxon>
        <taxon>Basidiomycota</taxon>
        <taxon>Agaricomycotina</taxon>
        <taxon>Tremellomycetes</taxon>
        <taxon>Tremellales</taxon>
        <taxon>Cryptococcaceae</taxon>
        <taxon>Cryptococcus</taxon>
        <taxon>Cryptococcus neoformans species complex</taxon>
    </lineage>
</organism>
<gene>
    <name evidence="5" type="primary">HOM3</name>
    <name evidence="7" type="ORF">CNAG_04347</name>
</gene>
<sequence length="615" mass="66025">MSSASTPTAPYLEDLVRNSLDQNLPWVVQKYGGTSVGKSLDNITKIVGSYIDNGSKVAIVCSARSTQTKSLGTTNLLLQASREALQPAMSSSGDGRSGSMSGTATPFYPKRVGSGFFGKDQSTSMTSSVSSLSQLESQLGRSGSPSPFQSSSSRSPPRSPATPSQDSSISQEPAFHATVDLIKKGHLEAARASLKGGPLRDELEEEIERDCESLRSFLYAAQIIDEISPRSQDSIVGTGERLACKIVAAALRDRGVDSELVVLDNIVDASMSAASEAVSVDAGDQGVAQLGQEFYDQLSFRLGERLRECGQRVPVVTGYFGPVPGSLLAQIGRGYTDLCAALCAVGLKASELQVWKEVDGIFTADPRKVPSARLVPIITPDEAAELTYYGSEVIHPFTMEQVIRARIPIRIKNVENPSGAGTVIYPDVGFPRGLDTEPPKAERIVEGVDERMPTAVTIKDEIIVLNIHSNRKTLSHGFLARIFGTLDRAGVVVDLISTSEVHVSMAMQDFLNRKRLERLVKDLEKIGEVTVSKDMAILSLVGRNMRNAIGSAGLMFASLARAMINIEMISQGASEINISCVIENKDAIKALNVIHESCLSYPRSPATEMAGLQLQ</sequence>
<reference evidence="8" key="1">
    <citation type="journal article" date="2014" name="PLoS Genet.">
        <title>Analysis of the genome and transcriptome of Cryptococcus neoformans var. grubii reveals complex RNA expression and microevolution leading to virulence attenuation.</title>
        <authorList>
            <person name="Janbon G."/>
            <person name="Ormerod K.L."/>
            <person name="Paulet D."/>
            <person name="Byrnes E.J. III"/>
            <person name="Yadav V."/>
            <person name="Chatterjee G."/>
            <person name="Mullapudi N."/>
            <person name="Hon C.-C."/>
            <person name="Billmyre R.B."/>
            <person name="Brunel F."/>
            <person name="Bahn Y.-S."/>
            <person name="Chen W."/>
            <person name="Chen Y."/>
            <person name="Chow E.W.L."/>
            <person name="Coppee J.-Y."/>
            <person name="Floyd-Averette A."/>
            <person name="Gaillardin C."/>
            <person name="Gerik K.J."/>
            <person name="Goldberg J."/>
            <person name="Gonzalez-Hilarion S."/>
            <person name="Gujja S."/>
            <person name="Hamlin J.L."/>
            <person name="Hsueh Y.-P."/>
            <person name="Ianiri G."/>
            <person name="Jones S."/>
            <person name="Kodira C.D."/>
            <person name="Kozubowski L."/>
            <person name="Lam W."/>
            <person name="Marra M."/>
            <person name="Mesner L.D."/>
            <person name="Mieczkowski P.A."/>
            <person name="Moyrand F."/>
            <person name="Nielsen K."/>
            <person name="Proux C."/>
            <person name="Rossignol T."/>
            <person name="Schein J.E."/>
            <person name="Sun S."/>
            <person name="Wollschlaeger C."/>
            <person name="Wood I.A."/>
            <person name="Zeng Q."/>
            <person name="Neuveglise C."/>
            <person name="Newlon C.S."/>
            <person name="Perfect J.R."/>
            <person name="Lodge J.K."/>
            <person name="Idnurm A."/>
            <person name="Stajich J.E."/>
            <person name="Kronstad J.W."/>
            <person name="Sanyal K."/>
            <person name="Heitman J."/>
            <person name="Fraser J.A."/>
            <person name="Cuomo C.A."/>
            <person name="Dietrich F.S."/>
        </authorList>
    </citation>
    <scope>NUCLEOTIDE SEQUENCE [LARGE SCALE GENOMIC DNA]</scope>
    <source>
        <strain evidence="8">H99 / ATCC 208821 / CBS 10515 / FGSC 9487</strain>
    </source>
</reference>
<reference evidence="6" key="2">
    <citation type="journal article" date="2008" name="Microbiology">
        <title>Threonine biosynthetic genes are essential in Cryptococcus neoformans.</title>
        <authorList>
            <person name="Kingsbury J.M."/>
            <person name="McCusker J.H."/>
        </authorList>
    </citation>
    <scope>FUNCTION</scope>
    <scope>PATHWAY</scope>
    <scope>DISRUPTION PHENOTYPE</scope>
</reference>